<organism>
    <name type="scientific">Escherichia coli O9:H4 (strain HS)</name>
    <dbReference type="NCBI Taxonomy" id="331112"/>
    <lineage>
        <taxon>Bacteria</taxon>
        <taxon>Pseudomonadati</taxon>
        <taxon>Pseudomonadota</taxon>
        <taxon>Gammaproteobacteria</taxon>
        <taxon>Enterobacterales</taxon>
        <taxon>Enterobacteriaceae</taxon>
        <taxon>Escherichia</taxon>
    </lineage>
</organism>
<accession>A8A2T8</accession>
<reference key="1">
    <citation type="journal article" date="2008" name="J. Bacteriol.">
        <title>The pangenome structure of Escherichia coli: comparative genomic analysis of E. coli commensal and pathogenic isolates.</title>
        <authorList>
            <person name="Rasko D.A."/>
            <person name="Rosovitz M.J."/>
            <person name="Myers G.S.A."/>
            <person name="Mongodin E.F."/>
            <person name="Fricke W.F."/>
            <person name="Gajer P."/>
            <person name="Crabtree J."/>
            <person name="Sebaihia M."/>
            <person name="Thomson N.R."/>
            <person name="Chaudhuri R."/>
            <person name="Henderson I.R."/>
            <person name="Sperandio V."/>
            <person name="Ravel J."/>
        </authorList>
    </citation>
    <scope>NUCLEOTIDE SEQUENCE [LARGE SCALE GENOMIC DNA]</scope>
    <source>
        <strain>HS</strain>
    </source>
</reference>
<gene>
    <name evidence="1" type="primary">eutC</name>
    <name type="ordered locus">EcHS_A2577</name>
</gene>
<evidence type="ECO:0000255" key="1">
    <source>
        <dbReference type="HAMAP-Rule" id="MF_00601"/>
    </source>
</evidence>
<name>EUTC_ECOHS</name>
<dbReference type="EC" id="4.3.1.7" evidence="1"/>
<dbReference type="EMBL" id="CP000802">
    <property type="protein sequence ID" value="ABV06842.1"/>
    <property type="molecule type" value="Genomic_DNA"/>
</dbReference>
<dbReference type="RefSeq" id="WP_000372364.1">
    <property type="nucleotide sequence ID" value="NC_009800.1"/>
</dbReference>
<dbReference type="SMR" id="A8A2T8"/>
<dbReference type="KEGG" id="ecx:EcHS_A2577"/>
<dbReference type="HOGENOM" id="CLU_068224_0_0_6"/>
<dbReference type="UniPathway" id="UPA00560"/>
<dbReference type="GO" id="GO:0009350">
    <property type="term" value="C:ethanolamine ammonia-lyase complex"/>
    <property type="evidence" value="ECO:0007669"/>
    <property type="project" value="UniProtKB-UniRule"/>
</dbReference>
<dbReference type="GO" id="GO:0031471">
    <property type="term" value="C:ethanolamine degradation polyhedral organelle"/>
    <property type="evidence" value="ECO:0007669"/>
    <property type="project" value="UniProtKB-UniRule"/>
</dbReference>
<dbReference type="GO" id="GO:0031419">
    <property type="term" value="F:cobalamin binding"/>
    <property type="evidence" value="ECO:0007669"/>
    <property type="project" value="UniProtKB-UniRule"/>
</dbReference>
<dbReference type="GO" id="GO:0008851">
    <property type="term" value="F:ethanolamine ammonia-lyase activity"/>
    <property type="evidence" value="ECO:0007669"/>
    <property type="project" value="UniProtKB-UniRule"/>
</dbReference>
<dbReference type="GO" id="GO:0006520">
    <property type="term" value="P:amino acid metabolic process"/>
    <property type="evidence" value="ECO:0007669"/>
    <property type="project" value="InterPro"/>
</dbReference>
<dbReference type="GO" id="GO:0046336">
    <property type="term" value="P:ethanolamine catabolic process"/>
    <property type="evidence" value="ECO:0007669"/>
    <property type="project" value="UniProtKB-UniRule"/>
</dbReference>
<dbReference type="FunFam" id="3.40.50.11240:FF:000001">
    <property type="entry name" value="Ethanolamine ammonia-lyase light chain"/>
    <property type="match status" value="1"/>
</dbReference>
<dbReference type="Gene3D" id="6.10.140.690">
    <property type="match status" value="1"/>
</dbReference>
<dbReference type="Gene3D" id="6.10.250.2060">
    <property type="match status" value="1"/>
</dbReference>
<dbReference type="Gene3D" id="3.40.50.11240">
    <property type="entry name" value="Ethanolamine ammonia-lyase light chain (EutC)"/>
    <property type="match status" value="1"/>
</dbReference>
<dbReference type="HAMAP" id="MF_00601">
    <property type="entry name" value="EutC"/>
    <property type="match status" value="1"/>
</dbReference>
<dbReference type="InterPro" id="IPR009246">
    <property type="entry name" value="EutC"/>
</dbReference>
<dbReference type="InterPro" id="IPR042251">
    <property type="entry name" value="EutC_C"/>
</dbReference>
<dbReference type="NCBIfam" id="NF003971">
    <property type="entry name" value="PRK05465.1"/>
    <property type="match status" value="1"/>
</dbReference>
<dbReference type="PANTHER" id="PTHR39330">
    <property type="entry name" value="ETHANOLAMINE AMMONIA-LYASE LIGHT CHAIN"/>
    <property type="match status" value="1"/>
</dbReference>
<dbReference type="PANTHER" id="PTHR39330:SF1">
    <property type="entry name" value="ETHANOLAMINE AMMONIA-LYASE SMALL SUBUNIT"/>
    <property type="match status" value="1"/>
</dbReference>
<dbReference type="Pfam" id="PF05985">
    <property type="entry name" value="EutC"/>
    <property type="match status" value="1"/>
</dbReference>
<dbReference type="PIRSF" id="PIRSF018982">
    <property type="entry name" value="EutC"/>
    <property type="match status" value="1"/>
</dbReference>
<proteinExistence type="inferred from homology"/>
<protein>
    <recommendedName>
        <fullName evidence="1">Ethanolamine ammonia-lyase small subunit</fullName>
        <shortName evidence="1">EAL small subunit</shortName>
        <ecNumber evidence="1">4.3.1.7</ecNumber>
    </recommendedName>
</protein>
<keyword id="KW-1283">Bacterial microcompartment</keyword>
<keyword id="KW-0846">Cobalamin</keyword>
<keyword id="KW-0170">Cobalt</keyword>
<keyword id="KW-0456">Lyase</keyword>
<sequence length="295" mass="31812">MDQKQIEEIVRSVMASMGQTAPAPSEAKCATTNCAAPVTSESCALDLGSAEAKAWIGVENPHRADVLTELRRSTVARVCTGRAGPRPRTQALLRFLADHSRSKDTVLKEVPEEWVKAQGLLEVRSEISDKNLYLTRPDMGRRLCAEAVEALKAQCVANPDVQVVISDGLSTDAITVNYEEILPPLMAGLKQAGLKVGTPFFVRYGRVKIEDQIGEILGAKVVILLVGERPGLGQSESLSCYAVYSPRMATTVEADRTCISNIHQGGTPPVEAAAVIVDLAKRMLEQKASGINMTR</sequence>
<comment type="function">
    <text evidence="1">Catalyzes the deamination of various vicinal amino-alcohols to oxo compounds. Allows this organism to utilize ethanolamine as the sole source of nitrogen and carbon in the presence of external vitamin B12.</text>
</comment>
<comment type="catalytic activity">
    <reaction evidence="1">
        <text>ethanolamine = acetaldehyde + NH4(+)</text>
        <dbReference type="Rhea" id="RHEA:15313"/>
        <dbReference type="ChEBI" id="CHEBI:15343"/>
        <dbReference type="ChEBI" id="CHEBI:28938"/>
        <dbReference type="ChEBI" id="CHEBI:57603"/>
        <dbReference type="EC" id="4.3.1.7"/>
    </reaction>
</comment>
<comment type="cofactor">
    <cofactor evidence="1">
        <name>adenosylcob(III)alamin</name>
        <dbReference type="ChEBI" id="CHEBI:18408"/>
    </cofactor>
    <text evidence="1">Binds between the large and small subunits.</text>
</comment>
<comment type="pathway">
    <text evidence="1">Amine and polyamine degradation; ethanolamine degradation.</text>
</comment>
<comment type="subunit">
    <text evidence="1">The basic unit is a heterodimer which dimerizes to form tetramers. The heterotetramers trimerize; 6 large subunits form a core ring with 6 small subunits projecting outwards.</text>
</comment>
<comment type="subcellular location">
    <subcellularLocation>
        <location evidence="1">Bacterial microcompartment</location>
    </subcellularLocation>
</comment>
<comment type="similarity">
    <text evidence="1">Belongs to the EutC family.</text>
</comment>
<feature type="chain" id="PRO_1000061263" description="Ethanolamine ammonia-lyase small subunit">
    <location>
        <begin position="1"/>
        <end position="295"/>
    </location>
</feature>
<feature type="binding site" evidence="1">
    <location>
        <position position="207"/>
    </location>
    <ligand>
        <name>adenosylcob(III)alamin</name>
        <dbReference type="ChEBI" id="CHEBI:18408"/>
    </ligand>
</feature>
<feature type="binding site" evidence="1">
    <location>
        <position position="228"/>
    </location>
    <ligand>
        <name>adenosylcob(III)alamin</name>
        <dbReference type="ChEBI" id="CHEBI:18408"/>
    </ligand>
</feature>
<feature type="binding site" evidence="1">
    <location>
        <position position="258"/>
    </location>
    <ligand>
        <name>adenosylcob(III)alamin</name>
        <dbReference type="ChEBI" id="CHEBI:18408"/>
    </ligand>
</feature>